<reference key="1">
    <citation type="journal article" date="2002" name="Nature">
        <title>Complete genome sequence of the model actinomycete Streptomyces coelicolor A3(2).</title>
        <authorList>
            <person name="Bentley S.D."/>
            <person name="Chater K.F."/>
            <person name="Cerdeno-Tarraga A.-M."/>
            <person name="Challis G.L."/>
            <person name="Thomson N.R."/>
            <person name="James K.D."/>
            <person name="Harris D.E."/>
            <person name="Quail M.A."/>
            <person name="Kieser H."/>
            <person name="Harper D."/>
            <person name="Bateman A."/>
            <person name="Brown S."/>
            <person name="Chandra G."/>
            <person name="Chen C.W."/>
            <person name="Collins M."/>
            <person name="Cronin A."/>
            <person name="Fraser A."/>
            <person name="Goble A."/>
            <person name="Hidalgo J."/>
            <person name="Hornsby T."/>
            <person name="Howarth S."/>
            <person name="Huang C.-H."/>
            <person name="Kieser T."/>
            <person name="Larke L."/>
            <person name="Murphy L.D."/>
            <person name="Oliver K."/>
            <person name="O'Neil S."/>
            <person name="Rabbinowitsch E."/>
            <person name="Rajandream M.A."/>
            <person name="Rutherford K.M."/>
            <person name="Rutter S."/>
            <person name="Seeger K."/>
            <person name="Saunders D."/>
            <person name="Sharp S."/>
            <person name="Squares R."/>
            <person name="Squares S."/>
            <person name="Taylor K."/>
            <person name="Warren T."/>
            <person name="Wietzorrek A."/>
            <person name="Woodward J.R."/>
            <person name="Barrell B.G."/>
            <person name="Parkhill J."/>
            <person name="Hopwood D.A."/>
        </authorList>
    </citation>
    <scope>NUCLEOTIDE SEQUENCE [LARGE SCALE GENOMIC DNA]</scope>
    <source>
        <strain>ATCC BAA-471 / A3(2) / M145</strain>
    </source>
</reference>
<sequence>MTATAGSNKRAIRRALVSVYDKTGLEDLARGLHEAGVELVSTGSTAGRIAAAGVPVTKVEELTGFPECLDGRVKTLHPKVHAGILADLRLESHRQQLDELGVAPFDLVVVNLYPFRETVASGATPDECVEQIDIGGPSMVRAAAKNHPSVAVVTSPARYADVLLAVEGGGFDLAARKRLAAEAFQHTAAYDVAVASWFAAEYAPVDESGFPDFLGATYERANTLRYGENPHQPAALYTSPEGGGLAQAEQLHGKEMSYNNYTDTDAARRAAYDHAEPCVAIIKHANPCGIAIGADVAEAHRKAHDCDPVSAYGGVIAVNRPVSKEMAERVAGIFTEVIVAPDYEDGALEALTKKKNIRVLRAPAAPAAPVEVKPIDGGALLQVTDRLQAEGDDPATWTLATGEALSEAELAELAFAWRACRAVKSNAILLAKDGASVGVGMGQVNRVDSAKLAVERAGAERAQGAYAASDAFFPFPDGLEILTGAGVKAVVQPGGSVRDELVVEAAKKAGVTMYFTGTRHFFH</sequence>
<gene>
    <name evidence="1" type="primary">purH</name>
    <name type="ordered locus">SCO4814</name>
    <name type="ORF">SCD63A.25</name>
</gene>
<dbReference type="EC" id="2.1.2.3" evidence="1"/>
<dbReference type="EC" id="3.5.4.10" evidence="1"/>
<dbReference type="EMBL" id="AL939121">
    <property type="protein sequence ID" value="CAB92677.1"/>
    <property type="molecule type" value="Genomic_DNA"/>
</dbReference>
<dbReference type="RefSeq" id="NP_628971.1">
    <property type="nucleotide sequence ID" value="NC_003888.3"/>
</dbReference>
<dbReference type="RefSeq" id="WP_011029883.1">
    <property type="nucleotide sequence ID" value="NZ_VNID01000016.1"/>
</dbReference>
<dbReference type="SMR" id="Q9KY50"/>
<dbReference type="FunCoup" id="Q9KY50">
    <property type="interactions" value="431"/>
</dbReference>
<dbReference type="STRING" id="100226.gene:17762463"/>
<dbReference type="PaxDb" id="100226-SCO4814"/>
<dbReference type="KEGG" id="sco:SCO4814"/>
<dbReference type="PATRIC" id="fig|100226.15.peg.4891"/>
<dbReference type="eggNOG" id="COG0138">
    <property type="taxonomic scope" value="Bacteria"/>
</dbReference>
<dbReference type="HOGENOM" id="CLU_016316_5_2_11"/>
<dbReference type="InParanoid" id="Q9KY50"/>
<dbReference type="OrthoDB" id="9802065at2"/>
<dbReference type="PhylomeDB" id="Q9KY50"/>
<dbReference type="UniPathway" id="UPA00074">
    <property type="reaction ID" value="UER00133"/>
</dbReference>
<dbReference type="UniPathway" id="UPA00074">
    <property type="reaction ID" value="UER00135"/>
</dbReference>
<dbReference type="Proteomes" id="UP000001973">
    <property type="component" value="Chromosome"/>
</dbReference>
<dbReference type="GO" id="GO:0005829">
    <property type="term" value="C:cytosol"/>
    <property type="evidence" value="ECO:0000318"/>
    <property type="project" value="GO_Central"/>
</dbReference>
<dbReference type="GO" id="GO:0003937">
    <property type="term" value="F:IMP cyclohydrolase activity"/>
    <property type="evidence" value="ECO:0000318"/>
    <property type="project" value="GO_Central"/>
</dbReference>
<dbReference type="GO" id="GO:0004643">
    <property type="term" value="F:phosphoribosylaminoimidazolecarboxamide formyltransferase activity"/>
    <property type="evidence" value="ECO:0000318"/>
    <property type="project" value="GO_Central"/>
</dbReference>
<dbReference type="GO" id="GO:0006189">
    <property type="term" value="P:'de novo' IMP biosynthetic process"/>
    <property type="evidence" value="ECO:0000318"/>
    <property type="project" value="GO_Central"/>
</dbReference>
<dbReference type="CDD" id="cd01421">
    <property type="entry name" value="IMPCH"/>
    <property type="match status" value="1"/>
</dbReference>
<dbReference type="FunFam" id="3.40.140.20:FF:000001">
    <property type="entry name" value="Bifunctional purine biosynthesis protein PurH"/>
    <property type="match status" value="1"/>
</dbReference>
<dbReference type="FunFam" id="3.40.140.20:FF:000002">
    <property type="entry name" value="Bifunctional purine biosynthesis protein PurH"/>
    <property type="match status" value="1"/>
</dbReference>
<dbReference type="FunFam" id="3.40.50.1380:FF:000001">
    <property type="entry name" value="Bifunctional purine biosynthesis protein PurH"/>
    <property type="match status" value="1"/>
</dbReference>
<dbReference type="Gene3D" id="3.40.140.20">
    <property type="match status" value="2"/>
</dbReference>
<dbReference type="Gene3D" id="3.40.50.1380">
    <property type="entry name" value="Methylglyoxal synthase-like domain"/>
    <property type="match status" value="1"/>
</dbReference>
<dbReference type="HAMAP" id="MF_00139">
    <property type="entry name" value="PurH"/>
    <property type="match status" value="1"/>
</dbReference>
<dbReference type="InterPro" id="IPR024051">
    <property type="entry name" value="AICAR_Tfase_dup_dom_sf"/>
</dbReference>
<dbReference type="InterPro" id="IPR016193">
    <property type="entry name" value="Cytidine_deaminase-like"/>
</dbReference>
<dbReference type="InterPro" id="IPR011607">
    <property type="entry name" value="MGS-like_dom"/>
</dbReference>
<dbReference type="InterPro" id="IPR036914">
    <property type="entry name" value="MGS-like_dom_sf"/>
</dbReference>
<dbReference type="InterPro" id="IPR002695">
    <property type="entry name" value="PurH-like"/>
</dbReference>
<dbReference type="NCBIfam" id="NF002049">
    <property type="entry name" value="PRK00881.1"/>
    <property type="match status" value="1"/>
</dbReference>
<dbReference type="NCBIfam" id="TIGR00355">
    <property type="entry name" value="purH"/>
    <property type="match status" value="1"/>
</dbReference>
<dbReference type="PANTHER" id="PTHR11692:SF0">
    <property type="entry name" value="BIFUNCTIONAL PURINE BIOSYNTHESIS PROTEIN ATIC"/>
    <property type="match status" value="1"/>
</dbReference>
<dbReference type="PANTHER" id="PTHR11692">
    <property type="entry name" value="BIFUNCTIONAL PURINE BIOSYNTHESIS PROTEIN PURH"/>
    <property type="match status" value="1"/>
</dbReference>
<dbReference type="Pfam" id="PF01808">
    <property type="entry name" value="AICARFT_IMPCHas"/>
    <property type="match status" value="1"/>
</dbReference>
<dbReference type="Pfam" id="PF02142">
    <property type="entry name" value="MGS"/>
    <property type="match status" value="1"/>
</dbReference>
<dbReference type="PIRSF" id="PIRSF000414">
    <property type="entry name" value="AICARFT_IMPCHas"/>
    <property type="match status" value="1"/>
</dbReference>
<dbReference type="SMART" id="SM00798">
    <property type="entry name" value="AICARFT_IMPCHas"/>
    <property type="match status" value="1"/>
</dbReference>
<dbReference type="SMART" id="SM00851">
    <property type="entry name" value="MGS"/>
    <property type="match status" value="1"/>
</dbReference>
<dbReference type="SUPFAM" id="SSF53927">
    <property type="entry name" value="Cytidine deaminase-like"/>
    <property type="match status" value="1"/>
</dbReference>
<dbReference type="SUPFAM" id="SSF52335">
    <property type="entry name" value="Methylglyoxal synthase-like"/>
    <property type="match status" value="1"/>
</dbReference>
<dbReference type="PROSITE" id="PS51855">
    <property type="entry name" value="MGS"/>
    <property type="match status" value="1"/>
</dbReference>
<accession>Q9KY50</accession>
<comment type="catalytic activity">
    <reaction evidence="1">
        <text>(6R)-10-formyltetrahydrofolate + 5-amino-1-(5-phospho-beta-D-ribosyl)imidazole-4-carboxamide = 5-formamido-1-(5-phospho-D-ribosyl)imidazole-4-carboxamide + (6S)-5,6,7,8-tetrahydrofolate</text>
        <dbReference type="Rhea" id="RHEA:22192"/>
        <dbReference type="ChEBI" id="CHEBI:57453"/>
        <dbReference type="ChEBI" id="CHEBI:58467"/>
        <dbReference type="ChEBI" id="CHEBI:58475"/>
        <dbReference type="ChEBI" id="CHEBI:195366"/>
        <dbReference type="EC" id="2.1.2.3"/>
    </reaction>
</comment>
<comment type="catalytic activity">
    <reaction evidence="1">
        <text>IMP + H2O = 5-formamido-1-(5-phospho-D-ribosyl)imidazole-4-carboxamide</text>
        <dbReference type="Rhea" id="RHEA:18445"/>
        <dbReference type="ChEBI" id="CHEBI:15377"/>
        <dbReference type="ChEBI" id="CHEBI:58053"/>
        <dbReference type="ChEBI" id="CHEBI:58467"/>
        <dbReference type="EC" id="3.5.4.10"/>
    </reaction>
</comment>
<comment type="pathway">
    <text evidence="1">Purine metabolism; IMP biosynthesis via de novo pathway; 5-formamido-1-(5-phospho-D-ribosyl)imidazole-4-carboxamide from 5-amino-1-(5-phospho-D-ribosyl)imidazole-4-carboxamide (10-formyl THF route): step 1/1.</text>
</comment>
<comment type="pathway">
    <text evidence="1">Purine metabolism; IMP biosynthesis via de novo pathway; IMP from 5-formamido-1-(5-phospho-D-ribosyl)imidazole-4-carboxamide: step 1/1.</text>
</comment>
<comment type="domain">
    <text evidence="1">The IMP cyclohydrolase activity resides in the N-terminal region.</text>
</comment>
<comment type="similarity">
    <text evidence="1">Belongs to the PurH family.</text>
</comment>
<feature type="chain" id="PRO_0000192132" description="Bifunctional purine biosynthesis protein PurH">
    <location>
        <begin position="1"/>
        <end position="523"/>
    </location>
</feature>
<feature type="domain" description="MGS-like" evidence="2">
    <location>
        <begin position="1"/>
        <end position="154"/>
    </location>
</feature>
<organism>
    <name type="scientific">Streptomyces coelicolor (strain ATCC BAA-471 / A3(2) / M145)</name>
    <dbReference type="NCBI Taxonomy" id="100226"/>
    <lineage>
        <taxon>Bacteria</taxon>
        <taxon>Bacillati</taxon>
        <taxon>Actinomycetota</taxon>
        <taxon>Actinomycetes</taxon>
        <taxon>Kitasatosporales</taxon>
        <taxon>Streptomycetaceae</taxon>
        <taxon>Streptomyces</taxon>
        <taxon>Streptomyces albidoflavus group</taxon>
    </lineage>
</organism>
<proteinExistence type="inferred from homology"/>
<protein>
    <recommendedName>
        <fullName evidence="1">Bifunctional purine biosynthesis protein PurH</fullName>
    </recommendedName>
    <domain>
        <recommendedName>
            <fullName evidence="1">Phosphoribosylaminoimidazolecarboxamide formyltransferase</fullName>
            <ecNumber evidence="1">2.1.2.3</ecNumber>
        </recommendedName>
        <alternativeName>
            <fullName evidence="1">AICAR transformylase</fullName>
        </alternativeName>
    </domain>
    <domain>
        <recommendedName>
            <fullName evidence="1">IMP cyclohydrolase</fullName>
            <ecNumber evidence="1">3.5.4.10</ecNumber>
        </recommendedName>
        <alternativeName>
            <fullName evidence="1">ATIC</fullName>
        </alternativeName>
        <alternativeName>
            <fullName evidence="1">IMP synthase</fullName>
        </alternativeName>
        <alternativeName>
            <fullName evidence="1">Inosinicase</fullName>
        </alternativeName>
    </domain>
</protein>
<name>PUR9_STRCO</name>
<evidence type="ECO:0000255" key="1">
    <source>
        <dbReference type="HAMAP-Rule" id="MF_00139"/>
    </source>
</evidence>
<evidence type="ECO:0000255" key="2">
    <source>
        <dbReference type="PROSITE-ProRule" id="PRU01202"/>
    </source>
</evidence>
<keyword id="KW-0378">Hydrolase</keyword>
<keyword id="KW-0511">Multifunctional enzyme</keyword>
<keyword id="KW-0658">Purine biosynthesis</keyword>
<keyword id="KW-1185">Reference proteome</keyword>
<keyword id="KW-0808">Transferase</keyword>